<feature type="chain" id="PRO_1000004062" description="Small ribosomal subunit protein uS2">
    <location>
        <begin position="1"/>
        <end position="242"/>
    </location>
</feature>
<reference key="1">
    <citation type="submission" date="2007-07" db="EMBL/GenBank/DDBJ databases">
        <title>Complete sequence of chromosome of Shewanella baltica OS185.</title>
        <authorList>
            <consortium name="US DOE Joint Genome Institute"/>
            <person name="Copeland A."/>
            <person name="Lucas S."/>
            <person name="Lapidus A."/>
            <person name="Barry K."/>
            <person name="Glavina del Rio T."/>
            <person name="Dalin E."/>
            <person name="Tice H."/>
            <person name="Pitluck S."/>
            <person name="Sims D."/>
            <person name="Brettin T."/>
            <person name="Bruce D."/>
            <person name="Detter J.C."/>
            <person name="Han C."/>
            <person name="Schmutz J."/>
            <person name="Larimer F."/>
            <person name="Land M."/>
            <person name="Hauser L."/>
            <person name="Kyrpides N."/>
            <person name="Mikhailova N."/>
            <person name="Brettar I."/>
            <person name="Rodrigues J."/>
            <person name="Konstantinidis K."/>
            <person name="Tiedje J."/>
            <person name="Richardson P."/>
        </authorList>
    </citation>
    <scope>NUCLEOTIDE SEQUENCE [LARGE SCALE GENOMIC DNA]</scope>
    <source>
        <strain>OS185</strain>
    </source>
</reference>
<sequence length="242" mass="26570">MTTVSMRDMLQAGVHFGHQTRYWNPKMKPFIFGARNGVHIINLEHTVPMFNEALAFISNVASKKGKVLFVGTKRAAGEAIKESALSCDQFYVDHRWLGGMLTNWKTVRQSIKRLKELESQSVDGTFDKLTKKEALMRTRELEKLEKSLGGIKNMGGLPDVLFVIGADHEHIAIKEANNLGIPVVAVVDTNSAPDGVNYIVPGNDDAMRAIRLYTSSVAAAAKAGRGQDLAVQAEQDGFVEAE</sequence>
<comment type="similarity">
    <text evidence="1">Belongs to the universal ribosomal protein uS2 family.</text>
</comment>
<keyword id="KW-0687">Ribonucleoprotein</keyword>
<keyword id="KW-0689">Ribosomal protein</keyword>
<proteinExistence type="inferred from homology"/>
<protein>
    <recommendedName>
        <fullName evidence="1">Small ribosomal subunit protein uS2</fullName>
    </recommendedName>
    <alternativeName>
        <fullName evidence="2">30S ribosomal protein S2</fullName>
    </alternativeName>
</protein>
<accession>A6WLA6</accession>
<evidence type="ECO:0000255" key="1">
    <source>
        <dbReference type="HAMAP-Rule" id="MF_00291"/>
    </source>
</evidence>
<evidence type="ECO:0000305" key="2"/>
<dbReference type="EMBL" id="CP000753">
    <property type="protein sequence ID" value="ABS07595.1"/>
    <property type="molecule type" value="Genomic_DNA"/>
</dbReference>
<dbReference type="RefSeq" id="WP_006080979.1">
    <property type="nucleotide sequence ID" value="NC_009665.1"/>
</dbReference>
<dbReference type="SMR" id="A6WLA6"/>
<dbReference type="GeneID" id="11771730"/>
<dbReference type="KEGG" id="sbm:Shew185_1445"/>
<dbReference type="HOGENOM" id="CLU_040318_1_2_6"/>
<dbReference type="GO" id="GO:0022627">
    <property type="term" value="C:cytosolic small ribosomal subunit"/>
    <property type="evidence" value="ECO:0007669"/>
    <property type="project" value="TreeGrafter"/>
</dbReference>
<dbReference type="GO" id="GO:0003735">
    <property type="term" value="F:structural constituent of ribosome"/>
    <property type="evidence" value="ECO:0007669"/>
    <property type="project" value="InterPro"/>
</dbReference>
<dbReference type="GO" id="GO:0006412">
    <property type="term" value="P:translation"/>
    <property type="evidence" value="ECO:0007669"/>
    <property type="project" value="UniProtKB-UniRule"/>
</dbReference>
<dbReference type="CDD" id="cd01425">
    <property type="entry name" value="RPS2"/>
    <property type="match status" value="1"/>
</dbReference>
<dbReference type="FunFam" id="1.10.287.610:FF:000001">
    <property type="entry name" value="30S ribosomal protein S2"/>
    <property type="match status" value="1"/>
</dbReference>
<dbReference type="Gene3D" id="3.40.50.10490">
    <property type="entry name" value="Glucose-6-phosphate isomerase like protein, domain 1"/>
    <property type="match status" value="1"/>
</dbReference>
<dbReference type="Gene3D" id="1.10.287.610">
    <property type="entry name" value="Helix hairpin bin"/>
    <property type="match status" value="1"/>
</dbReference>
<dbReference type="HAMAP" id="MF_00291_B">
    <property type="entry name" value="Ribosomal_uS2_B"/>
    <property type="match status" value="1"/>
</dbReference>
<dbReference type="InterPro" id="IPR001865">
    <property type="entry name" value="Ribosomal_uS2"/>
</dbReference>
<dbReference type="InterPro" id="IPR005706">
    <property type="entry name" value="Ribosomal_uS2_bac/mit/plastid"/>
</dbReference>
<dbReference type="InterPro" id="IPR018130">
    <property type="entry name" value="Ribosomal_uS2_CS"/>
</dbReference>
<dbReference type="InterPro" id="IPR023591">
    <property type="entry name" value="Ribosomal_uS2_flav_dom_sf"/>
</dbReference>
<dbReference type="NCBIfam" id="TIGR01011">
    <property type="entry name" value="rpsB_bact"/>
    <property type="match status" value="1"/>
</dbReference>
<dbReference type="PANTHER" id="PTHR12534">
    <property type="entry name" value="30S RIBOSOMAL PROTEIN S2 PROKARYOTIC AND ORGANELLAR"/>
    <property type="match status" value="1"/>
</dbReference>
<dbReference type="PANTHER" id="PTHR12534:SF0">
    <property type="entry name" value="SMALL RIBOSOMAL SUBUNIT PROTEIN US2M"/>
    <property type="match status" value="1"/>
</dbReference>
<dbReference type="Pfam" id="PF00318">
    <property type="entry name" value="Ribosomal_S2"/>
    <property type="match status" value="1"/>
</dbReference>
<dbReference type="PRINTS" id="PR00395">
    <property type="entry name" value="RIBOSOMALS2"/>
</dbReference>
<dbReference type="SUPFAM" id="SSF52313">
    <property type="entry name" value="Ribosomal protein S2"/>
    <property type="match status" value="1"/>
</dbReference>
<dbReference type="PROSITE" id="PS00962">
    <property type="entry name" value="RIBOSOMAL_S2_1"/>
    <property type="match status" value="1"/>
</dbReference>
<dbReference type="PROSITE" id="PS00963">
    <property type="entry name" value="RIBOSOMAL_S2_2"/>
    <property type="match status" value="1"/>
</dbReference>
<gene>
    <name evidence="1" type="primary">rpsB</name>
    <name type="ordered locus">Shew185_1445</name>
</gene>
<organism>
    <name type="scientific">Shewanella baltica (strain OS185)</name>
    <dbReference type="NCBI Taxonomy" id="402882"/>
    <lineage>
        <taxon>Bacteria</taxon>
        <taxon>Pseudomonadati</taxon>
        <taxon>Pseudomonadota</taxon>
        <taxon>Gammaproteobacteria</taxon>
        <taxon>Alteromonadales</taxon>
        <taxon>Shewanellaceae</taxon>
        <taxon>Shewanella</taxon>
    </lineage>
</organism>
<name>RS2_SHEB8</name>